<protein>
    <recommendedName>
        <fullName evidence="8">T cell receptor beta variable 12-5</fullName>
    </recommendedName>
</protein>
<reference key="1">
    <citation type="journal article" date="2003" name="Nature">
        <title>The DNA sequence of human chromosome 7.</title>
        <authorList>
            <person name="Hillier L.W."/>
            <person name="Fulton R.S."/>
            <person name="Fulton L.A."/>
            <person name="Graves T.A."/>
            <person name="Pepin K.H."/>
            <person name="Wagner-McPherson C."/>
            <person name="Layman D."/>
            <person name="Maas J."/>
            <person name="Jaeger S."/>
            <person name="Walker R."/>
            <person name="Wylie K."/>
            <person name="Sekhon M."/>
            <person name="Becker M.C."/>
            <person name="O'Laughlin M.D."/>
            <person name="Schaller M.E."/>
            <person name="Fewell G.A."/>
            <person name="Delehaunty K.D."/>
            <person name="Miner T.L."/>
            <person name="Nash W.E."/>
            <person name="Cordes M."/>
            <person name="Du H."/>
            <person name="Sun H."/>
            <person name="Edwards J."/>
            <person name="Bradshaw-Cordum H."/>
            <person name="Ali J."/>
            <person name="Andrews S."/>
            <person name="Isak A."/>
            <person name="Vanbrunt A."/>
            <person name="Nguyen C."/>
            <person name="Du F."/>
            <person name="Lamar B."/>
            <person name="Courtney L."/>
            <person name="Kalicki J."/>
            <person name="Ozersky P."/>
            <person name="Bielicki L."/>
            <person name="Scott K."/>
            <person name="Holmes A."/>
            <person name="Harkins R."/>
            <person name="Harris A."/>
            <person name="Strong C.M."/>
            <person name="Hou S."/>
            <person name="Tomlinson C."/>
            <person name="Dauphin-Kohlberg S."/>
            <person name="Kozlowicz-Reilly A."/>
            <person name="Leonard S."/>
            <person name="Rohlfing T."/>
            <person name="Rock S.M."/>
            <person name="Tin-Wollam A.-M."/>
            <person name="Abbott A."/>
            <person name="Minx P."/>
            <person name="Maupin R."/>
            <person name="Strowmatt C."/>
            <person name="Latreille P."/>
            <person name="Miller N."/>
            <person name="Johnson D."/>
            <person name="Murray J."/>
            <person name="Woessner J.P."/>
            <person name="Wendl M.C."/>
            <person name="Yang S.-P."/>
            <person name="Schultz B.R."/>
            <person name="Wallis J.W."/>
            <person name="Spieth J."/>
            <person name="Bieri T.A."/>
            <person name="Nelson J.O."/>
            <person name="Berkowicz N."/>
            <person name="Wohldmann P.E."/>
            <person name="Cook L.L."/>
            <person name="Hickenbotham M.T."/>
            <person name="Eldred J."/>
            <person name="Williams D."/>
            <person name="Bedell J.A."/>
            <person name="Mardis E.R."/>
            <person name="Clifton S.W."/>
            <person name="Chissoe S.L."/>
            <person name="Marra M.A."/>
            <person name="Raymond C."/>
            <person name="Haugen E."/>
            <person name="Gillett W."/>
            <person name="Zhou Y."/>
            <person name="James R."/>
            <person name="Phelps K."/>
            <person name="Iadanoto S."/>
            <person name="Bubb K."/>
            <person name="Simms E."/>
            <person name="Levy R."/>
            <person name="Clendenning J."/>
            <person name="Kaul R."/>
            <person name="Kent W.J."/>
            <person name="Furey T.S."/>
            <person name="Baertsch R.A."/>
            <person name="Brent M.R."/>
            <person name="Keibler E."/>
            <person name="Flicek P."/>
            <person name="Bork P."/>
            <person name="Suyama M."/>
            <person name="Bailey J.A."/>
            <person name="Portnoy M.E."/>
            <person name="Torrents D."/>
            <person name="Chinwalla A.T."/>
            <person name="Gish W.R."/>
            <person name="Eddy S.R."/>
            <person name="McPherson J.D."/>
            <person name="Olson M.V."/>
            <person name="Eichler E.E."/>
            <person name="Green E.D."/>
            <person name="Waterston R.H."/>
            <person name="Wilson R.K."/>
        </authorList>
    </citation>
    <scope>NUCLEOTIDE SEQUENCE [LARGE SCALE GENOMIC DNA] (IMGT ALLELE TRBV12-5*01)</scope>
</reference>
<reference key="2">
    <citation type="book" date="2001" name="The T Cell Receptor FactsBook.">
        <title>The T Cell Receptor FactsBook.</title>
        <editorList>
            <person name="Lefranc M.P."/>
            <person name="Lefranc G."/>
        </editorList>
        <authorList>
            <person name="Lefranc M.P."/>
            <person name="Lefranc G."/>
        </authorList>
    </citation>
    <scope>NOMENCLATURE</scope>
</reference>
<reference key="3">
    <citation type="journal article" date="2004" name="Nat. Rev. Immunol.">
        <title>The many important facets of T-cell repertoire diversity.</title>
        <authorList>
            <person name="Nikolich-Zugich J."/>
            <person name="Slifka M.K."/>
            <person name="Messaoudi I."/>
        </authorList>
    </citation>
    <scope>REVIEW ON T CELL REPERTOIRE DIVERSITY</scope>
</reference>
<reference key="4">
    <citation type="journal article" date="2010" name="Cold Spring Harb. Perspect. Biol.">
        <title>Structural biology of the T-cell receptor: insights into receptor assembly, ligand recognition, and initiation of signaling.</title>
        <authorList>
            <person name="Wucherpfennig K.W."/>
            <person name="Gagnon E."/>
            <person name="Call M.J."/>
            <person name="Huseby E.S."/>
            <person name="Call M.E."/>
        </authorList>
    </citation>
    <scope>REVIEW ON T CELL RECEPTOR-CD3 COMPLEX ASSEMBLY</scope>
    <scope>SUBCELLULAR LOCATION</scope>
</reference>
<reference key="5">
    <citation type="journal article" date="2013" name="Nat. Rev. Immunol.">
        <title>T cell receptor signalling networks: branched, diversified and bounded.</title>
        <authorList>
            <person name="Brownlie R.J."/>
            <person name="Zamoyska R."/>
        </authorList>
    </citation>
    <scope>REVIEW ON T CELL RECEPTOR SIGNALING</scope>
</reference>
<reference key="6">
    <citation type="journal article" date="2014" name="Front. Immunol.">
        <title>Immunoglobulin and T Cell Receptor Genes: IMGT((R)) and the Birth and Rise of Immunoinformatics.</title>
        <authorList>
            <person name="Lefranc M.P."/>
        </authorList>
    </citation>
    <scope>NOMENCLATURE</scope>
</reference>
<reference key="7">
    <citation type="journal article" date="2015" name="Annu. Rev. Immunol.">
        <title>T cell antigen receptor recognition of antigen-presenting molecules.</title>
        <authorList>
            <person name="Rossjohn J."/>
            <person name="Gras S."/>
            <person name="Miles J.J."/>
            <person name="Turner S.J."/>
            <person name="Godfrey D.I."/>
            <person name="McCluskey J."/>
        </authorList>
    </citation>
    <scope>REVIEW ON FUNCTION</scope>
</reference>
<comment type="function">
    <text evidence="3 5 6 7">V region of the variable domain of T cell receptor (TR) beta chain that participates in the antigen recognition (PubMed:24600447). Alpha-beta T cell receptors are antigen specific receptors which are essential to the immune response and are present on the cell surface of T lymphocytes. Recognize peptide-major histocompatibility (MH) (pMH) complexes that are displayed by antigen presenting cells (APC), a prerequisite for efficient T cell adaptive immunity against pathogens (PubMed:25493333). Binding of alpha-beta TR to pMH complex initiates TR-CD3 clustering on the cell surface and intracellular activation of LCK that phosphorylates the ITAM motifs of CD3G, CD3D, CD3E and CD247 enabling the recruitment of ZAP70. In turn ZAP70 phosphorylates LAT, which recruits numerous signaling molecules to form the LAT signalosome. The LAT signalosome propagates signal branching to three major signaling pathways, the calcium, the mitogen-activated protein kinase (MAPK) kinase and the nuclear factor NF-kappa-B (NF-kB) pathways, leading to the mobilization of transcription factors that are critical for gene expression and essential for T cell growth and differentiation (PubMed:23524462). The T cell repertoire is generated in the thymus, by V-(D)-J rearrangement. This repertoire is then shaped by intrathymic selection events to generate a peripheral T cell pool of self-MH restricted, non-autoaggressive T cells. Post-thymic interaction of alpha-beta TR with the pMH complexes shapes TR structural and functional avidity (PubMed:15040585).</text>
</comment>
<comment type="subunit">
    <text evidence="4">Alpha-beta TR is a heterodimer composed of an alpha and beta chain; disulfide-linked. The alpha-beta TR is associated with the transmembrane signaling CD3 coreceptor proteins to form the TR-CD3 (TcR or TCR). The assembly of alpha-beta TR heterodimers with CD3 occurs in the endoplasmic reticulum where a single alpha-beta TR heterodimer associates with one CD3D-CD3E heterodimer, one CD3G-CD3E heterodimer and one CD247 homodimer forming a stable octameric structure. CD3D-CD3E and CD3G-CD3E heterodimers preferentially associate with TR alpha and TR beta chains, respectively. The association of the CD247 homodimer is the last step of TcR assembly in the endoplasmic reticulum and is required for transport to the cell surface.</text>
</comment>
<comment type="subcellular location">
    <subcellularLocation>
        <location evidence="4">Cell membrane</location>
    </subcellularLocation>
</comment>
<comment type="polymorphism">
    <text evidence="9">There are several alleles. The sequence shown is that of IMGT allele TRBV12-5*01.</text>
</comment>
<organism>
    <name type="scientific">Homo sapiens</name>
    <name type="common">Human</name>
    <dbReference type="NCBI Taxonomy" id="9606"/>
    <lineage>
        <taxon>Eukaryota</taxon>
        <taxon>Metazoa</taxon>
        <taxon>Chordata</taxon>
        <taxon>Craniata</taxon>
        <taxon>Vertebrata</taxon>
        <taxon>Euteleostomi</taxon>
        <taxon>Mammalia</taxon>
        <taxon>Eutheria</taxon>
        <taxon>Euarchontoglires</taxon>
        <taxon>Primates</taxon>
        <taxon>Haplorrhini</taxon>
        <taxon>Catarrhini</taxon>
        <taxon>Hominidae</taxon>
        <taxon>Homo</taxon>
    </lineage>
</organism>
<feature type="signal peptide" evidence="1">
    <location>
        <begin position="1"/>
        <end position="21"/>
    </location>
</feature>
<feature type="chain" id="PRO_5008408718" description="T cell receptor beta variable 12-5" evidence="1">
    <location>
        <begin position="22"/>
        <end position="115"/>
    </location>
</feature>
<feature type="domain" description="Ig-like" evidence="2">
    <location>
        <begin position="22"/>
        <end position="115" status="greater than"/>
    </location>
</feature>
<feature type="disulfide bond" evidence="2">
    <location>
        <begin position="42"/>
        <end position="111"/>
    </location>
</feature>
<feature type="non-terminal residue">
    <location>
        <position position="115"/>
    </location>
</feature>
<accession>A0A1B0GX78</accession>
<evidence type="ECO:0000255" key="1"/>
<evidence type="ECO:0000255" key="2">
    <source>
        <dbReference type="PROSITE-ProRule" id="PRU00114"/>
    </source>
</evidence>
<evidence type="ECO:0000303" key="3">
    <source>
    </source>
</evidence>
<evidence type="ECO:0000303" key="4">
    <source>
    </source>
</evidence>
<evidence type="ECO:0000303" key="5">
    <source>
    </source>
</evidence>
<evidence type="ECO:0000303" key="6">
    <source>
    </source>
</evidence>
<evidence type="ECO:0000303" key="7">
    <source>
    </source>
</evidence>
<evidence type="ECO:0000303" key="8">
    <source ref="2"/>
</evidence>
<evidence type="ECO:0000305" key="9"/>
<name>TVBL5_HUMAN</name>
<keyword id="KW-1064">Adaptive immunity</keyword>
<keyword id="KW-1003">Cell membrane</keyword>
<keyword id="KW-1015">Disulfide bond</keyword>
<keyword id="KW-0391">Immunity</keyword>
<keyword id="KW-0393">Immunoglobulin domain</keyword>
<keyword id="KW-0472">Membrane</keyword>
<keyword id="KW-0675">Receptor</keyword>
<keyword id="KW-1185">Reference proteome</keyword>
<keyword id="KW-0732">Signal</keyword>
<keyword id="KW-1279">T cell receptor</keyword>
<sequence length="115" mass="12997">MATRLLCCVVLCLLGEELIDARVTQTPRHKVTEMGQEVTMRCQPILGHNTVFWYRQTMMQGLELLAYFRNRAPLDDSGMPKDRFSAEMPDATLATLKIQPSEPRDSAVYFCASGL</sequence>
<dbReference type="EMBL" id="AC244196">
    <property type="status" value="NOT_ANNOTATED_CDS"/>
    <property type="molecule type" value="Genomic_DNA"/>
</dbReference>
<dbReference type="SMR" id="A0A1B0GX78"/>
<dbReference type="FunCoup" id="A0A1B0GX78">
    <property type="interactions" value="401"/>
</dbReference>
<dbReference type="IMGT_GENE-DB" id="TRBV12-5"/>
<dbReference type="BioMuta" id="ENSG00000275158"/>
<dbReference type="MassIVE" id="A0A1B0GX78"/>
<dbReference type="Ensembl" id="ENST00000621184.1">
    <property type="protein sequence ID" value="ENSP00000479506.1"/>
    <property type="gene ID" value="ENSG00000275158.1"/>
</dbReference>
<dbReference type="AGR" id="HGNC:12187"/>
<dbReference type="GeneCards" id="TRBV12-5"/>
<dbReference type="HGNC" id="HGNC:12187">
    <property type="gene designation" value="TRBV12-5"/>
</dbReference>
<dbReference type="HPA" id="ENSG00000275158">
    <property type="expression patterns" value="Tissue enriched (lymphoid)"/>
</dbReference>
<dbReference type="neXtProt" id="NX_A0A1B0GX78"/>
<dbReference type="VEuPathDB" id="HostDB:ENSG00000275158"/>
<dbReference type="GeneTree" id="ENSGT00940000162707"/>
<dbReference type="InParanoid" id="A0A1B0GX78"/>
<dbReference type="OMA" id="DSAMYIC"/>
<dbReference type="OrthoDB" id="9803478at2759"/>
<dbReference type="PAN-GO" id="A0A1B0GX78">
    <property type="GO annotations" value="2 GO annotations based on evolutionary models"/>
</dbReference>
<dbReference type="ChiTaRS" id="TRBV12-5">
    <property type="organism name" value="human"/>
</dbReference>
<dbReference type="Pharos" id="A0A1B0GX78">
    <property type="development level" value="Tdark"/>
</dbReference>
<dbReference type="PRO" id="PR:A0A1B0GX78"/>
<dbReference type="Proteomes" id="UP000005640">
    <property type="component" value="Chromosome 7"/>
</dbReference>
<dbReference type="RNAct" id="A0A1B0GX78">
    <property type="molecule type" value="protein"/>
</dbReference>
<dbReference type="Bgee" id="ENSG00000275158">
    <property type="expression patterns" value="Expressed in primordial germ cell in gonad and 47 other cell types or tissues"/>
</dbReference>
<dbReference type="GO" id="GO:0005886">
    <property type="term" value="C:plasma membrane"/>
    <property type="evidence" value="ECO:0000318"/>
    <property type="project" value="GO_Central"/>
</dbReference>
<dbReference type="GO" id="GO:0042101">
    <property type="term" value="C:T cell receptor complex"/>
    <property type="evidence" value="ECO:0007669"/>
    <property type="project" value="UniProtKB-KW"/>
</dbReference>
<dbReference type="GO" id="GO:0002250">
    <property type="term" value="P:adaptive immune response"/>
    <property type="evidence" value="ECO:0007669"/>
    <property type="project" value="UniProtKB-KW"/>
</dbReference>
<dbReference type="GO" id="GO:0007166">
    <property type="term" value="P:cell surface receptor signaling pathway"/>
    <property type="evidence" value="ECO:0000318"/>
    <property type="project" value="GO_Central"/>
</dbReference>
<dbReference type="FunFam" id="2.60.40.10:FF:002491">
    <property type="entry name" value="T cell receptor beta variable 12-4"/>
    <property type="match status" value="1"/>
</dbReference>
<dbReference type="Gene3D" id="2.60.40.10">
    <property type="entry name" value="Immunoglobulins"/>
    <property type="match status" value="1"/>
</dbReference>
<dbReference type="InterPro" id="IPR007110">
    <property type="entry name" value="Ig-like_dom"/>
</dbReference>
<dbReference type="InterPro" id="IPR036179">
    <property type="entry name" value="Ig-like_dom_sf"/>
</dbReference>
<dbReference type="InterPro" id="IPR013783">
    <property type="entry name" value="Ig-like_fold"/>
</dbReference>
<dbReference type="InterPro" id="IPR013106">
    <property type="entry name" value="Ig_V-set"/>
</dbReference>
<dbReference type="InterPro" id="IPR050413">
    <property type="entry name" value="TCR_beta_variable"/>
</dbReference>
<dbReference type="PANTHER" id="PTHR23268:SF91">
    <property type="entry name" value="T CELL RECEPTOR BETA VARIABLE 12-5"/>
    <property type="match status" value="1"/>
</dbReference>
<dbReference type="PANTHER" id="PTHR23268">
    <property type="entry name" value="T-CELL RECEPTOR BETA CHAIN"/>
    <property type="match status" value="1"/>
</dbReference>
<dbReference type="Pfam" id="PF07686">
    <property type="entry name" value="V-set"/>
    <property type="match status" value="1"/>
</dbReference>
<dbReference type="SMART" id="SM00406">
    <property type="entry name" value="IGv"/>
    <property type="match status" value="1"/>
</dbReference>
<dbReference type="SUPFAM" id="SSF48726">
    <property type="entry name" value="Immunoglobulin"/>
    <property type="match status" value="1"/>
</dbReference>
<dbReference type="PROSITE" id="PS50835">
    <property type="entry name" value="IG_LIKE"/>
    <property type="match status" value="1"/>
</dbReference>
<proteinExistence type="inferred from homology"/>
<gene>
    <name evidence="8" type="primary">TRBV12-5</name>
</gene>